<keyword id="KW-0119">Carbohydrate metabolism</keyword>
<keyword id="KW-0321">Glycogen metabolism</keyword>
<keyword id="KW-0326">Glycosidase</keyword>
<keyword id="KW-0378">Hydrolase</keyword>
<comment type="function">
    <text evidence="1">Removes maltotriose and maltotetraose chains that are attached by 1,6-alpha-linkage to the limit dextrin main chain, generating a debranched limit dextrin.</text>
</comment>
<comment type="catalytic activity">
    <reaction evidence="1">
        <text>Hydrolysis of (1-&gt;6)-alpha-D-glucosidic linkages to branches with degrees of polymerization of three or four glucose residues in limit dextrin.</text>
        <dbReference type="EC" id="3.2.1.196"/>
    </reaction>
</comment>
<comment type="pathway">
    <text evidence="1">Glycan degradation; glycogen degradation.</text>
</comment>
<comment type="similarity">
    <text evidence="1">Belongs to the glycosyl hydrolase 13 family.</text>
</comment>
<evidence type="ECO:0000255" key="1">
    <source>
        <dbReference type="HAMAP-Rule" id="MF_01248"/>
    </source>
</evidence>
<evidence type="ECO:0000256" key="2">
    <source>
        <dbReference type="SAM" id="MobiDB-lite"/>
    </source>
</evidence>
<dbReference type="EC" id="3.2.1.196" evidence="1"/>
<dbReference type="EMBL" id="CP000026">
    <property type="protein sequence ID" value="AAV79201.1"/>
    <property type="molecule type" value="Genomic_DNA"/>
</dbReference>
<dbReference type="RefSeq" id="WP_000192488.1">
    <property type="nucleotide sequence ID" value="NC_006511.1"/>
</dbReference>
<dbReference type="SMR" id="Q5PM07"/>
<dbReference type="CAZy" id="CBM48">
    <property type="family name" value="Carbohydrate-Binding Module Family 48"/>
</dbReference>
<dbReference type="CAZy" id="GH13">
    <property type="family name" value="Glycoside Hydrolase Family 13"/>
</dbReference>
<dbReference type="KEGG" id="spt:SPA3388"/>
<dbReference type="HOGENOM" id="CLU_011725_1_1_6"/>
<dbReference type="UniPathway" id="UPA00165"/>
<dbReference type="Proteomes" id="UP000008185">
    <property type="component" value="Chromosome"/>
</dbReference>
<dbReference type="GO" id="GO:0004133">
    <property type="term" value="F:glycogen debranching enzyme activity"/>
    <property type="evidence" value="ECO:0007669"/>
    <property type="project" value="UniProtKB-UniRule"/>
</dbReference>
<dbReference type="GO" id="GO:0004553">
    <property type="term" value="F:hydrolase activity, hydrolyzing O-glycosyl compounds"/>
    <property type="evidence" value="ECO:0007669"/>
    <property type="project" value="InterPro"/>
</dbReference>
<dbReference type="GO" id="GO:0005980">
    <property type="term" value="P:glycogen catabolic process"/>
    <property type="evidence" value="ECO:0007669"/>
    <property type="project" value="UniProtKB-UniRule"/>
</dbReference>
<dbReference type="CDD" id="cd11326">
    <property type="entry name" value="AmyAc_Glg_debranch"/>
    <property type="match status" value="1"/>
</dbReference>
<dbReference type="CDD" id="cd02856">
    <property type="entry name" value="E_set_GDE_Isoamylase_N"/>
    <property type="match status" value="1"/>
</dbReference>
<dbReference type="FunFam" id="2.60.40.10:FF:000468">
    <property type="entry name" value="Glycogen debranching enzyme"/>
    <property type="match status" value="1"/>
</dbReference>
<dbReference type="Gene3D" id="3.20.20.80">
    <property type="entry name" value="Glycosidases"/>
    <property type="match status" value="1"/>
</dbReference>
<dbReference type="Gene3D" id="2.60.40.1180">
    <property type="entry name" value="Golgi alpha-mannosidase II"/>
    <property type="match status" value="1"/>
</dbReference>
<dbReference type="Gene3D" id="2.60.40.10">
    <property type="entry name" value="Immunoglobulins"/>
    <property type="match status" value="1"/>
</dbReference>
<dbReference type="HAMAP" id="MF_01248">
    <property type="entry name" value="GlgX"/>
    <property type="match status" value="1"/>
</dbReference>
<dbReference type="InterPro" id="IPR040784">
    <property type="entry name" value="GlgX_C"/>
</dbReference>
<dbReference type="InterPro" id="IPR044505">
    <property type="entry name" value="GlgX_Isoamylase_N_E_set"/>
</dbReference>
<dbReference type="InterPro" id="IPR006047">
    <property type="entry name" value="Glyco_hydro_13_cat_dom"/>
</dbReference>
<dbReference type="InterPro" id="IPR004193">
    <property type="entry name" value="Glyco_hydro_13_N"/>
</dbReference>
<dbReference type="InterPro" id="IPR013780">
    <property type="entry name" value="Glyco_hydro_b"/>
</dbReference>
<dbReference type="InterPro" id="IPR022844">
    <property type="entry name" value="Glycogen_debranch_bac"/>
</dbReference>
<dbReference type="InterPro" id="IPR011837">
    <property type="entry name" value="Glycogen_debranch_GlgX"/>
</dbReference>
<dbReference type="InterPro" id="IPR017853">
    <property type="entry name" value="Glycoside_hydrolase_SF"/>
</dbReference>
<dbReference type="InterPro" id="IPR013783">
    <property type="entry name" value="Ig-like_fold"/>
</dbReference>
<dbReference type="InterPro" id="IPR014756">
    <property type="entry name" value="Ig_E-set"/>
</dbReference>
<dbReference type="NCBIfam" id="TIGR02100">
    <property type="entry name" value="glgX_debranch"/>
    <property type="match status" value="1"/>
</dbReference>
<dbReference type="NCBIfam" id="NF002983">
    <property type="entry name" value="PRK03705.1"/>
    <property type="match status" value="1"/>
</dbReference>
<dbReference type="PANTHER" id="PTHR43002">
    <property type="entry name" value="GLYCOGEN DEBRANCHING ENZYME"/>
    <property type="match status" value="1"/>
</dbReference>
<dbReference type="Pfam" id="PF00128">
    <property type="entry name" value="Alpha-amylase"/>
    <property type="match status" value="1"/>
</dbReference>
<dbReference type="Pfam" id="PF02922">
    <property type="entry name" value="CBM_48"/>
    <property type="match status" value="1"/>
</dbReference>
<dbReference type="Pfam" id="PF18390">
    <property type="entry name" value="GlgX_C"/>
    <property type="match status" value="1"/>
</dbReference>
<dbReference type="SMART" id="SM00642">
    <property type="entry name" value="Aamy"/>
    <property type="match status" value="1"/>
</dbReference>
<dbReference type="SUPFAM" id="SSF51445">
    <property type="entry name" value="(Trans)glycosidases"/>
    <property type="match status" value="1"/>
</dbReference>
<dbReference type="SUPFAM" id="SSF81296">
    <property type="entry name" value="E set domains"/>
    <property type="match status" value="1"/>
</dbReference>
<gene>
    <name evidence="1" type="primary">glgX</name>
    <name type="ordered locus">SPA3388</name>
</gene>
<reference key="1">
    <citation type="journal article" date="2004" name="Nat. Genet.">
        <title>Comparison of genome degradation in Paratyphi A and Typhi, human-restricted serovars of Salmonella enterica that cause typhoid.</title>
        <authorList>
            <person name="McClelland M."/>
            <person name="Sanderson K.E."/>
            <person name="Clifton S.W."/>
            <person name="Latreille P."/>
            <person name="Porwollik S."/>
            <person name="Sabo A."/>
            <person name="Meyer R."/>
            <person name="Bieri T."/>
            <person name="Ozersky P."/>
            <person name="McLellan M."/>
            <person name="Harkins C.R."/>
            <person name="Wang C."/>
            <person name="Nguyen C."/>
            <person name="Berghoff A."/>
            <person name="Elliott G."/>
            <person name="Kohlberg S."/>
            <person name="Strong C."/>
            <person name="Du F."/>
            <person name="Carter J."/>
            <person name="Kremizki C."/>
            <person name="Layman D."/>
            <person name="Leonard S."/>
            <person name="Sun H."/>
            <person name="Fulton L."/>
            <person name="Nash W."/>
            <person name="Miner T."/>
            <person name="Minx P."/>
            <person name="Delehaunty K."/>
            <person name="Fronick C."/>
            <person name="Magrini V."/>
            <person name="Nhan M."/>
            <person name="Warren W."/>
            <person name="Florea L."/>
            <person name="Spieth J."/>
            <person name="Wilson R.K."/>
        </authorList>
    </citation>
    <scope>NUCLEOTIDE SEQUENCE [LARGE SCALE GENOMIC DNA]</scope>
    <source>
        <strain>ATCC 9150 / SARB42</strain>
    </source>
</reference>
<sequence>MTQLAIGEATPHGATYDGHGVNFTLFSAHAERVELCVFDSRGNERRYDLPGRRGDVWHGYLAGARPGLRYGYRVHGPWQPAQGHRFNPAKLLLDPYARRVEGELKDHPLLHGGHDEPDYRDNAAVAPKSVVISDHYDWEDDAAPRTPWGKTVIYEAHVKGLTYLHPELPQEIRGTYKALGHPVMVAYFKQLGITALELLPVAQFASEPRLQRMGLTNYWGYNPMAMFALHPAWASSPETALDEFRDAVKALHRAGIEVILDIVLNHSAELDLDGPTFSLRGIDNRSYYWIRDDGDYHNWTGCGNTLNLSHPDVVEYACECLRYWVETCHVDGFRFDLASVMGRTPTFRQDAPLFAAIKACPVLSTVKLIAEPWDIGEGGYQVGNFPPPFAEWNDHFRDAARRFWLPRNLTTGEFACRFAASSDVFKRNGRAPGASVNLLTAHDGFTLRDCVCFNQKHNEANGEENRDGTNSNYSDNHGKEGLGGPLDLMERRRDSIHALLATLLLSQGTPMLLAGDEHGHSQHGNNNAYCQDNALTWLDWQQANRGLTTFTAALIRLRQQIPALTGNSWWEEGDGNVRWLNKNAQPLSADEWQNGPKLMQILLSDRFLIAINATLEVTDIVLPEGEWRAVPPFAGEDNPVITAVWQGPAHGLCVFQRG</sequence>
<accession>Q5PM07</accession>
<proteinExistence type="inferred from homology"/>
<organism>
    <name type="scientific">Salmonella paratyphi A (strain ATCC 9150 / SARB42)</name>
    <dbReference type="NCBI Taxonomy" id="295319"/>
    <lineage>
        <taxon>Bacteria</taxon>
        <taxon>Pseudomonadati</taxon>
        <taxon>Pseudomonadota</taxon>
        <taxon>Gammaproteobacteria</taxon>
        <taxon>Enterobacterales</taxon>
        <taxon>Enterobacteriaceae</taxon>
        <taxon>Salmonella</taxon>
    </lineage>
</organism>
<feature type="chain" id="PRO_1000067104" description="Glycogen debranching enzyme">
    <location>
        <begin position="1"/>
        <end position="658"/>
    </location>
</feature>
<feature type="region of interest" description="Disordered" evidence="2">
    <location>
        <begin position="459"/>
        <end position="484"/>
    </location>
</feature>
<feature type="active site" description="Nucleophile" evidence="1">
    <location>
        <position position="336"/>
    </location>
</feature>
<feature type="active site" description="Proton donor" evidence="1">
    <location>
        <position position="371"/>
    </location>
</feature>
<feature type="site" description="Transition state stabilizer" evidence="1">
    <location>
        <position position="443"/>
    </location>
</feature>
<protein>
    <recommendedName>
        <fullName evidence="1">Glycogen debranching enzyme</fullName>
        <ecNumber evidence="1">3.2.1.196</ecNumber>
    </recommendedName>
    <alternativeName>
        <fullName evidence="1">Limit dextrin alpha-1,6-maltotetraose-hydrolase</fullName>
    </alternativeName>
</protein>
<name>GLGX_SALPA</name>